<evidence type="ECO:0000255" key="1">
    <source>
        <dbReference type="HAMAP-Rule" id="MF_00111"/>
    </source>
</evidence>
<gene>
    <name evidence="1" type="primary">murA1</name>
    <name type="synonym">murA</name>
    <name type="ordered locus">SAS2003</name>
</gene>
<protein>
    <recommendedName>
        <fullName evidence="1">UDP-N-acetylglucosamine 1-carboxyvinyltransferase 1</fullName>
        <ecNumber evidence="1">2.5.1.7</ecNumber>
    </recommendedName>
    <alternativeName>
        <fullName evidence="1">Enoylpyruvate transferase 1</fullName>
    </alternativeName>
    <alternativeName>
        <fullName evidence="1">UDP-N-acetylglucosamine enolpyruvyl transferase 1</fullName>
        <shortName evidence="1">EPT 1</shortName>
    </alternativeName>
</protein>
<comment type="function">
    <text evidence="1">Cell wall formation. Adds enolpyruvyl to UDP-N-acetylglucosamine.</text>
</comment>
<comment type="catalytic activity">
    <reaction evidence="1">
        <text>phosphoenolpyruvate + UDP-N-acetyl-alpha-D-glucosamine = UDP-N-acetyl-3-O-(1-carboxyvinyl)-alpha-D-glucosamine + phosphate</text>
        <dbReference type="Rhea" id="RHEA:18681"/>
        <dbReference type="ChEBI" id="CHEBI:43474"/>
        <dbReference type="ChEBI" id="CHEBI:57705"/>
        <dbReference type="ChEBI" id="CHEBI:58702"/>
        <dbReference type="ChEBI" id="CHEBI:68483"/>
        <dbReference type="EC" id="2.5.1.7"/>
    </reaction>
</comment>
<comment type="pathway">
    <text evidence="1">Cell wall biogenesis; peptidoglycan biosynthesis.</text>
</comment>
<comment type="subcellular location">
    <subcellularLocation>
        <location evidence="1">Cytoplasm</location>
    </subcellularLocation>
</comment>
<comment type="similarity">
    <text evidence="1">Belongs to the EPSP synthase family. MurA subfamily.</text>
</comment>
<sequence length="421" mass="44996">MDKIVIKGGNKLTGEVKVEGAKNAVLPILTASLLASDKPSKLVNVPALSDVETINNVLTTLNADVTYKKDENAVVVDATKTLNEEAPYEYVSKMRASILVMGPLLARLGHAIVALPGGCAIGSRPIEQHIKGFEALGAEIHLENGNIYANAKDGLKGTSIHLDFPSVGATQNIIMAASLAKGKTLIENAAKEPEIVDLANYINEMGGRITGAGTDTITINGVESLHGVEHAIIPDRIEAGTLLIAGAITRGDIFVRGAIKEHMASLVYKLEEMGVELDYQEDGIRVRAEGELQPVDIKTLPHPGFPTDMQSQMMALLLTANGHKVVTETVFENRFMHVAEFKRMNANINVEGRSAKLEGKSQLQGAQVKATDLRAAAALILAGLVADGKTSVTELTHLDRGYVDLHGKLKQLGADIERIND</sequence>
<organism>
    <name type="scientific">Staphylococcus aureus (strain MSSA476)</name>
    <dbReference type="NCBI Taxonomy" id="282459"/>
    <lineage>
        <taxon>Bacteria</taxon>
        <taxon>Bacillati</taxon>
        <taxon>Bacillota</taxon>
        <taxon>Bacilli</taxon>
        <taxon>Bacillales</taxon>
        <taxon>Staphylococcaceae</taxon>
        <taxon>Staphylococcus</taxon>
    </lineage>
</organism>
<proteinExistence type="inferred from homology"/>
<reference key="1">
    <citation type="journal article" date="2004" name="Proc. Natl. Acad. Sci. U.S.A.">
        <title>Complete genomes of two clinical Staphylococcus aureus strains: evidence for the rapid evolution of virulence and drug resistance.</title>
        <authorList>
            <person name="Holden M.T.G."/>
            <person name="Feil E.J."/>
            <person name="Lindsay J.A."/>
            <person name="Peacock S.J."/>
            <person name="Day N.P.J."/>
            <person name="Enright M.C."/>
            <person name="Foster T.J."/>
            <person name="Moore C.E."/>
            <person name="Hurst L."/>
            <person name="Atkin R."/>
            <person name="Barron A."/>
            <person name="Bason N."/>
            <person name="Bentley S.D."/>
            <person name="Chillingworth C."/>
            <person name="Chillingworth T."/>
            <person name="Churcher C."/>
            <person name="Clark L."/>
            <person name="Corton C."/>
            <person name="Cronin A."/>
            <person name="Doggett J."/>
            <person name="Dowd L."/>
            <person name="Feltwell T."/>
            <person name="Hance Z."/>
            <person name="Harris B."/>
            <person name="Hauser H."/>
            <person name="Holroyd S."/>
            <person name="Jagels K."/>
            <person name="James K.D."/>
            <person name="Lennard N."/>
            <person name="Line A."/>
            <person name="Mayes R."/>
            <person name="Moule S."/>
            <person name="Mungall K."/>
            <person name="Ormond D."/>
            <person name="Quail M.A."/>
            <person name="Rabbinowitsch E."/>
            <person name="Rutherford K.M."/>
            <person name="Sanders M."/>
            <person name="Sharp S."/>
            <person name="Simmonds M."/>
            <person name="Stevens K."/>
            <person name="Whitehead S."/>
            <person name="Barrell B.G."/>
            <person name="Spratt B.G."/>
            <person name="Parkhill J."/>
        </authorList>
    </citation>
    <scope>NUCLEOTIDE SEQUENCE [LARGE SCALE GENOMIC DNA]</scope>
    <source>
        <strain>MSSA476</strain>
    </source>
</reference>
<name>MURA1_STAAS</name>
<keyword id="KW-0131">Cell cycle</keyword>
<keyword id="KW-0132">Cell division</keyword>
<keyword id="KW-0133">Cell shape</keyword>
<keyword id="KW-0961">Cell wall biogenesis/degradation</keyword>
<keyword id="KW-0963">Cytoplasm</keyword>
<keyword id="KW-0573">Peptidoglycan synthesis</keyword>
<keyword id="KW-0670">Pyruvate</keyword>
<keyword id="KW-0808">Transferase</keyword>
<accession>Q6G7L0</accession>
<dbReference type="EC" id="2.5.1.7" evidence="1"/>
<dbReference type="EMBL" id="BX571857">
    <property type="protein sequence ID" value="CAG43811.1"/>
    <property type="molecule type" value="Genomic_DNA"/>
</dbReference>
<dbReference type="RefSeq" id="WP_000358006.1">
    <property type="nucleotide sequence ID" value="NC_002953.3"/>
</dbReference>
<dbReference type="SMR" id="Q6G7L0"/>
<dbReference type="KEGG" id="sas:SAS2003"/>
<dbReference type="HOGENOM" id="CLU_027387_0_0_9"/>
<dbReference type="UniPathway" id="UPA00219"/>
<dbReference type="GO" id="GO:0005737">
    <property type="term" value="C:cytoplasm"/>
    <property type="evidence" value="ECO:0007669"/>
    <property type="project" value="UniProtKB-SubCell"/>
</dbReference>
<dbReference type="GO" id="GO:0008760">
    <property type="term" value="F:UDP-N-acetylglucosamine 1-carboxyvinyltransferase activity"/>
    <property type="evidence" value="ECO:0007669"/>
    <property type="project" value="UniProtKB-UniRule"/>
</dbReference>
<dbReference type="GO" id="GO:0051301">
    <property type="term" value="P:cell division"/>
    <property type="evidence" value="ECO:0007669"/>
    <property type="project" value="UniProtKB-KW"/>
</dbReference>
<dbReference type="GO" id="GO:0071555">
    <property type="term" value="P:cell wall organization"/>
    <property type="evidence" value="ECO:0007669"/>
    <property type="project" value="UniProtKB-KW"/>
</dbReference>
<dbReference type="GO" id="GO:0009252">
    <property type="term" value="P:peptidoglycan biosynthetic process"/>
    <property type="evidence" value="ECO:0007669"/>
    <property type="project" value="UniProtKB-UniRule"/>
</dbReference>
<dbReference type="GO" id="GO:0008360">
    <property type="term" value="P:regulation of cell shape"/>
    <property type="evidence" value="ECO:0007669"/>
    <property type="project" value="UniProtKB-KW"/>
</dbReference>
<dbReference type="GO" id="GO:0019277">
    <property type="term" value="P:UDP-N-acetylgalactosamine biosynthetic process"/>
    <property type="evidence" value="ECO:0007669"/>
    <property type="project" value="InterPro"/>
</dbReference>
<dbReference type="CDD" id="cd01555">
    <property type="entry name" value="UdpNAET"/>
    <property type="match status" value="1"/>
</dbReference>
<dbReference type="FunFam" id="3.65.10.10:FF:000001">
    <property type="entry name" value="UDP-N-acetylglucosamine 1-carboxyvinyltransferase"/>
    <property type="match status" value="1"/>
</dbReference>
<dbReference type="Gene3D" id="3.65.10.10">
    <property type="entry name" value="Enolpyruvate transferase domain"/>
    <property type="match status" value="2"/>
</dbReference>
<dbReference type="HAMAP" id="MF_00111">
    <property type="entry name" value="MurA"/>
    <property type="match status" value="1"/>
</dbReference>
<dbReference type="InterPro" id="IPR001986">
    <property type="entry name" value="Enolpyruvate_Tfrase_dom"/>
</dbReference>
<dbReference type="InterPro" id="IPR036968">
    <property type="entry name" value="Enolpyruvate_Tfrase_sf"/>
</dbReference>
<dbReference type="InterPro" id="IPR050068">
    <property type="entry name" value="MurA_subfamily"/>
</dbReference>
<dbReference type="InterPro" id="IPR013792">
    <property type="entry name" value="RNA3'P_cycl/enolpyr_Trfase_a/b"/>
</dbReference>
<dbReference type="InterPro" id="IPR005750">
    <property type="entry name" value="UDP_GlcNAc_COvinyl_MurA"/>
</dbReference>
<dbReference type="NCBIfam" id="TIGR01072">
    <property type="entry name" value="murA"/>
    <property type="match status" value="1"/>
</dbReference>
<dbReference type="NCBIfam" id="NF006873">
    <property type="entry name" value="PRK09369.1"/>
    <property type="match status" value="1"/>
</dbReference>
<dbReference type="PANTHER" id="PTHR43783">
    <property type="entry name" value="UDP-N-ACETYLGLUCOSAMINE 1-CARBOXYVINYLTRANSFERASE"/>
    <property type="match status" value="1"/>
</dbReference>
<dbReference type="PANTHER" id="PTHR43783:SF1">
    <property type="entry name" value="UDP-N-ACETYLGLUCOSAMINE 1-CARBOXYVINYLTRANSFERASE"/>
    <property type="match status" value="1"/>
</dbReference>
<dbReference type="Pfam" id="PF00275">
    <property type="entry name" value="EPSP_synthase"/>
    <property type="match status" value="1"/>
</dbReference>
<dbReference type="SUPFAM" id="SSF55205">
    <property type="entry name" value="EPT/RTPC-like"/>
    <property type="match status" value="1"/>
</dbReference>
<feature type="chain" id="PRO_0000178922" description="UDP-N-acetylglucosamine 1-carboxyvinyltransferase 1">
    <location>
        <begin position="1"/>
        <end position="421"/>
    </location>
</feature>
<feature type="active site" description="Proton donor" evidence="1">
    <location>
        <position position="119"/>
    </location>
</feature>
<feature type="binding site" evidence="1">
    <location>
        <begin position="22"/>
        <end position="23"/>
    </location>
    <ligand>
        <name>phosphoenolpyruvate</name>
        <dbReference type="ChEBI" id="CHEBI:58702"/>
    </ligand>
</feature>
<feature type="binding site" evidence="1">
    <location>
        <position position="95"/>
    </location>
    <ligand>
        <name>UDP-N-acetyl-alpha-D-glucosamine</name>
        <dbReference type="ChEBI" id="CHEBI:57705"/>
    </ligand>
</feature>
<feature type="binding site" evidence="1">
    <location>
        <begin position="124"/>
        <end position="128"/>
    </location>
    <ligand>
        <name>UDP-N-acetyl-alpha-D-glucosamine</name>
        <dbReference type="ChEBI" id="CHEBI:57705"/>
    </ligand>
</feature>
<feature type="binding site" evidence="1">
    <location>
        <position position="308"/>
    </location>
    <ligand>
        <name>UDP-N-acetyl-alpha-D-glucosamine</name>
        <dbReference type="ChEBI" id="CHEBI:57705"/>
    </ligand>
</feature>
<feature type="binding site" evidence="1">
    <location>
        <position position="330"/>
    </location>
    <ligand>
        <name>UDP-N-acetyl-alpha-D-glucosamine</name>
        <dbReference type="ChEBI" id="CHEBI:57705"/>
    </ligand>
</feature>
<feature type="modified residue" description="2-(S-cysteinyl)pyruvic acid O-phosphothioketal" evidence="1">
    <location>
        <position position="119"/>
    </location>
</feature>